<accession>O94391</accession>
<dbReference type="EMBL" id="CU329671">
    <property type="protein sequence ID" value="CAA22444.1"/>
    <property type="molecule type" value="Genomic_DNA"/>
</dbReference>
<dbReference type="PIR" id="T40071">
    <property type="entry name" value="T40071"/>
</dbReference>
<dbReference type="SMR" id="O94391"/>
<dbReference type="BioGRID" id="277061">
    <property type="interactions" value="89"/>
</dbReference>
<dbReference type="FunCoup" id="O94391">
    <property type="interactions" value="206"/>
</dbReference>
<dbReference type="STRING" id="284812.O94391"/>
<dbReference type="iPTMnet" id="O94391"/>
<dbReference type="PaxDb" id="4896-SPBC29A10.16c.1"/>
<dbReference type="EnsemblFungi" id="SPBC29A10.16c.1">
    <property type="protein sequence ID" value="SPBC29A10.16c.1:pep"/>
    <property type="gene ID" value="SPBC29A10.16c"/>
</dbReference>
<dbReference type="KEGG" id="spo:2540533"/>
<dbReference type="PomBase" id="SPBC29A10.16c"/>
<dbReference type="VEuPathDB" id="FungiDB:SPBC29A10.16c"/>
<dbReference type="eggNOG" id="KOG0537">
    <property type="taxonomic scope" value="Eukaryota"/>
</dbReference>
<dbReference type="HOGENOM" id="CLU_102602_3_2_1"/>
<dbReference type="InParanoid" id="O94391"/>
<dbReference type="OMA" id="HNTRNDL"/>
<dbReference type="PhylomeDB" id="O94391"/>
<dbReference type="Reactome" id="R-SPO-1660661">
    <property type="pathway name" value="Sphingolipid de novo biosynthesis"/>
</dbReference>
<dbReference type="PRO" id="PR:O94391"/>
<dbReference type="Proteomes" id="UP000002485">
    <property type="component" value="Chromosome II"/>
</dbReference>
<dbReference type="GO" id="GO:0005783">
    <property type="term" value="C:endoplasmic reticulum"/>
    <property type="evidence" value="ECO:0007005"/>
    <property type="project" value="PomBase"/>
</dbReference>
<dbReference type="GO" id="GO:0005789">
    <property type="term" value="C:endoplasmic reticulum membrane"/>
    <property type="evidence" value="ECO:0000318"/>
    <property type="project" value="GO_Central"/>
</dbReference>
<dbReference type="GO" id="GO:0043231">
    <property type="term" value="C:intracellular membrane-bounded organelle"/>
    <property type="evidence" value="ECO:0000318"/>
    <property type="project" value="GO_Central"/>
</dbReference>
<dbReference type="GO" id="GO:0009055">
    <property type="term" value="F:electron transfer activity"/>
    <property type="evidence" value="ECO:0000266"/>
    <property type="project" value="PomBase"/>
</dbReference>
<dbReference type="GO" id="GO:0020037">
    <property type="term" value="F:heme binding"/>
    <property type="evidence" value="ECO:0000318"/>
    <property type="project" value="GO_Central"/>
</dbReference>
<dbReference type="GO" id="GO:0046872">
    <property type="term" value="F:metal ion binding"/>
    <property type="evidence" value="ECO:0007669"/>
    <property type="project" value="UniProtKB-KW"/>
</dbReference>
<dbReference type="GO" id="GO:0006696">
    <property type="term" value="P:ergosterol biosynthetic process"/>
    <property type="evidence" value="ECO:0000266"/>
    <property type="project" value="PomBase"/>
</dbReference>
<dbReference type="FunFam" id="3.10.120.10:FF:000002">
    <property type="entry name" value="Cytochrome b5 type B"/>
    <property type="match status" value="1"/>
</dbReference>
<dbReference type="Gene3D" id="3.10.120.10">
    <property type="entry name" value="Cytochrome b5-like heme/steroid binding domain"/>
    <property type="match status" value="1"/>
</dbReference>
<dbReference type="InterPro" id="IPR001199">
    <property type="entry name" value="Cyt_B5-like_heme/steroid-bd"/>
</dbReference>
<dbReference type="InterPro" id="IPR036400">
    <property type="entry name" value="Cyt_B5-like_heme/steroid_sf"/>
</dbReference>
<dbReference type="InterPro" id="IPR050668">
    <property type="entry name" value="Cytochrome_b5"/>
</dbReference>
<dbReference type="PANTHER" id="PTHR19359">
    <property type="entry name" value="CYTOCHROME B5"/>
    <property type="match status" value="1"/>
</dbReference>
<dbReference type="PANTHER" id="PTHR19359:SF150">
    <property type="entry name" value="CYTOCHROME B5"/>
    <property type="match status" value="1"/>
</dbReference>
<dbReference type="Pfam" id="PF00173">
    <property type="entry name" value="Cyt-b5"/>
    <property type="match status" value="1"/>
</dbReference>
<dbReference type="PRINTS" id="PR00363">
    <property type="entry name" value="CYTOCHROMEB5"/>
</dbReference>
<dbReference type="SMART" id="SM01117">
    <property type="entry name" value="Cyt-b5"/>
    <property type="match status" value="1"/>
</dbReference>
<dbReference type="SUPFAM" id="SSF55856">
    <property type="entry name" value="Cytochrome b5-like heme/steroid binding domain"/>
    <property type="match status" value="1"/>
</dbReference>
<dbReference type="PROSITE" id="PS50255">
    <property type="entry name" value="CYTOCHROME_B5_2"/>
    <property type="match status" value="1"/>
</dbReference>
<reference key="1">
    <citation type="journal article" date="2002" name="Nature">
        <title>The genome sequence of Schizosaccharomyces pombe.</title>
        <authorList>
            <person name="Wood V."/>
            <person name="Gwilliam R."/>
            <person name="Rajandream M.A."/>
            <person name="Lyne M.H."/>
            <person name="Lyne R."/>
            <person name="Stewart A."/>
            <person name="Sgouros J.G."/>
            <person name="Peat N."/>
            <person name="Hayles J."/>
            <person name="Baker S.G."/>
            <person name="Basham D."/>
            <person name="Bowman S."/>
            <person name="Brooks K."/>
            <person name="Brown D."/>
            <person name="Brown S."/>
            <person name="Chillingworth T."/>
            <person name="Churcher C.M."/>
            <person name="Collins M."/>
            <person name="Connor R."/>
            <person name="Cronin A."/>
            <person name="Davis P."/>
            <person name="Feltwell T."/>
            <person name="Fraser A."/>
            <person name="Gentles S."/>
            <person name="Goble A."/>
            <person name="Hamlin N."/>
            <person name="Harris D.E."/>
            <person name="Hidalgo J."/>
            <person name="Hodgson G."/>
            <person name="Holroyd S."/>
            <person name="Hornsby T."/>
            <person name="Howarth S."/>
            <person name="Huckle E.J."/>
            <person name="Hunt S."/>
            <person name="Jagels K."/>
            <person name="James K.D."/>
            <person name="Jones L."/>
            <person name="Jones M."/>
            <person name="Leather S."/>
            <person name="McDonald S."/>
            <person name="McLean J."/>
            <person name="Mooney P."/>
            <person name="Moule S."/>
            <person name="Mungall K.L."/>
            <person name="Murphy L.D."/>
            <person name="Niblett D."/>
            <person name="Odell C."/>
            <person name="Oliver K."/>
            <person name="O'Neil S."/>
            <person name="Pearson D."/>
            <person name="Quail M.A."/>
            <person name="Rabbinowitsch E."/>
            <person name="Rutherford K.M."/>
            <person name="Rutter S."/>
            <person name="Saunders D."/>
            <person name="Seeger K."/>
            <person name="Sharp S."/>
            <person name="Skelton J."/>
            <person name="Simmonds M.N."/>
            <person name="Squares R."/>
            <person name="Squares S."/>
            <person name="Stevens K."/>
            <person name="Taylor K."/>
            <person name="Taylor R.G."/>
            <person name="Tivey A."/>
            <person name="Walsh S.V."/>
            <person name="Warren T."/>
            <person name="Whitehead S."/>
            <person name="Woodward J.R."/>
            <person name="Volckaert G."/>
            <person name="Aert R."/>
            <person name="Robben J."/>
            <person name="Grymonprez B."/>
            <person name="Weltjens I."/>
            <person name="Vanstreels E."/>
            <person name="Rieger M."/>
            <person name="Schaefer M."/>
            <person name="Mueller-Auer S."/>
            <person name="Gabel C."/>
            <person name="Fuchs M."/>
            <person name="Duesterhoeft A."/>
            <person name="Fritzc C."/>
            <person name="Holzer E."/>
            <person name="Moestl D."/>
            <person name="Hilbert H."/>
            <person name="Borzym K."/>
            <person name="Langer I."/>
            <person name="Beck A."/>
            <person name="Lehrach H."/>
            <person name="Reinhardt R."/>
            <person name="Pohl T.M."/>
            <person name="Eger P."/>
            <person name="Zimmermann W."/>
            <person name="Wedler H."/>
            <person name="Wambutt R."/>
            <person name="Purnelle B."/>
            <person name="Goffeau A."/>
            <person name="Cadieu E."/>
            <person name="Dreano S."/>
            <person name="Gloux S."/>
            <person name="Lelaure V."/>
            <person name="Mottier S."/>
            <person name="Galibert F."/>
            <person name="Aves S.J."/>
            <person name="Xiang Z."/>
            <person name="Hunt C."/>
            <person name="Moore K."/>
            <person name="Hurst S.M."/>
            <person name="Lucas M."/>
            <person name="Rochet M."/>
            <person name="Gaillardin C."/>
            <person name="Tallada V.A."/>
            <person name="Garzon A."/>
            <person name="Thode G."/>
            <person name="Daga R.R."/>
            <person name="Cruzado L."/>
            <person name="Jimenez J."/>
            <person name="Sanchez M."/>
            <person name="del Rey F."/>
            <person name="Benito J."/>
            <person name="Dominguez A."/>
            <person name="Revuelta J.L."/>
            <person name="Moreno S."/>
            <person name="Armstrong J."/>
            <person name="Forsburg S.L."/>
            <person name="Cerutti L."/>
            <person name="Lowe T."/>
            <person name="McCombie W.R."/>
            <person name="Paulsen I."/>
            <person name="Potashkin J."/>
            <person name="Shpakovski G.V."/>
            <person name="Ussery D."/>
            <person name="Barrell B.G."/>
            <person name="Nurse P."/>
        </authorList>
    </citation>
    <scope>NUCLEOTIDE SEQUENCE [LARGE SCALE GENOMIC DNA]</scope>
    <source>
        <strain>972 / ATCC 24843</strain>
    </source>
</reference>
<comment type="function">
    <text evidence="1">Membrane bound hemoprotein which function as an electron carrier for several membrane bound oxygenases.</text>
</comment>
<comment type="subcellular location">
    <subcellularLocation>
        <location evidence="1">Endoplasmic reticulum membrane</location>
        <topology evidence="1">Single-pass membrane protein</topology>
        <orientation evidence="1">Cytoplasmic side</orientation>
    </subcellularLocation>
    <subcellularLocation>
        <location evidence="1">Microsome membrane</location>
        <topology evidence="1">Single-pass membrane protein</topology>
        <orientation evidence="1">Cytoplasmic side</orientation>
    </subcellularLocation>
</comment>
<comment type="similarity">
    <text evidence="4">Belongs to the cytochrome b5 family.</text>
</comment>
<name>CYB51_SCHPO</name>
<proteinExistence type="inferred from homology"/>
<sequence>MSVKYFEPEEIVEHNNSKDMYMVINGKVYDVSNFADDHPGGLDIMLDYAGQDATKAYQDIGHSIAADELLEEMYIGDLKPGTEERLKELKKPRSFDNDTPPLPLLIALIVLPAIAVIVFVKLNK</sequence>
<keyword id="KW-0249">Electron transport</keyword>
<keyword id="KW-0256">Endoplasmic reticulum</keyword>
<keyword id="KW-0349">Heme</keyword>
<keyword id="KW-0408">Iron</keyword>
<keyword id="KW-0472">Membrane</keyword>
<keyword id="KW-0479">Metal-binding</keyword>
<keyword id="KW-0492">Microsome</keyword>
<keyword id="KW-1185">Reference proteome</keyword>
<keyword id="KW-0812">Transmembrane</keyword>
<keyword id="KW-1133">Transmembrane helix</keyword>
<keyword id="KW-0813">Transport</keyword>
<evidence type="ECO:0000250" key="1"/>
<evidence type="ECO:0000255" key="2"/>
<evidence type="ECO:0000255" key="3">
    <source>
        <dbReference type="PROSITE-ProRule" id="PRU00279"/>
    </source>
</evidence>
<evidence type="ECO:0000305" key="4"/>
<feature type="chain" id="PRO_0000166033" description="Probable cytochrome b5 1">
    <location>
        <begin position="1"/>
        <end position="124"/>
    </location>
</feature>
<feature type="transmembrane region" description="Helical" evidence="2">
    <location>
        <begin position="100"/>
        <end position="120"/>
    </location>
</feature>
<feature type="domain" description="Cytochrome b5 heme-binding" evidence="3">
    <location>
        <begin position="3"/>
        <end position="79"/>
    </location>
</feature>
<feature type="binding site" description="axial binding residue" evidence="3">
    <location>
        <position position="38"/>
    </location>
    <ligand>
        <name>heme</name>
        <dbReference type="ChEBI" id="CHEBI:30413"/>
    </ligand>
    <ligandPart>
        <name>Fe</name>
        <dbReference type="ChEBI" id="CHEBI:18248"/>
    </ligandPart>
</feature>
<feature type="binding site" description="axial binding residue" evidence="3">
    <location>
        <position position="62"/>
    </location>
    <ligand>
        <name>heme</name>
        <dbReference type="ChEBI" id="CHEBI:30413"/>
    </ligand>
    <ligandPart>
        <name>Fe</name>
        <dbReference type="ChEBI" id="CHEBI:18248"/>
    </ligandPart>
</feature>
<organism>
    <name type="scientific">Schizosaccharomyces pombe (strain 972 / ATCC 24843)</name>
    <name type="common">Fission yeast</name>
    <dbReference type="NCBI Taxonomy" id="284812"/>
    <lineage>
        <taxon>Eukaryota</taxon>
        <taxon>Fungi</taxon>
        <taxon>Dikarya</taxon>
        <taxon>Ascomycota</taxon>
        <taxon>Taphrinomycotina</taxon>
        <taxon>Schizosaccharomycetes</taxon>
        <taxon>Schizosaccharomycetales</taxon>
        <taxon>Schizosaccharomycetaceae</taxon>
        <taxon>Schizosaccharomyces</taxon>
    </lineage>
</organism>
<gene>
    <name type="ORF">SPBC29A10.16c</name>
</gene>
<protein>
    <recommendedName>
        <fullName>Probable cytochrome b5 1</fullName>
    </recommendedName>
</protein>